<dbReference type="EC" id="2.7.7.3" evidence="1"/>
<dbReference type="EMBL" id="CP001217">
    <property type="protein sequence ID" value="ACJ08601.1"/>
    <property type="molecule type" value="Genomic_DNA"/>
</dbReference>
<dbReference type="SMR" id="B6JNX3"/>
<dbReference type="KEGG" id="hpp:HPP12_1453"/>
<dbReference type="HOGENOM" id="CLU_100149_1_1_7"/>
<dbReference type="UniPathway" id="UPA00241">
    <property type="reaction ID" value="UER00355"/>
</dbReference>
<dbReference type="Proteomes" id="UP000008198">
    <property type="component" value="Chromosome"/>
</dbReference>
<dbReference type="GO" id="GO:0005737">
    <property type="term" value="C:cytoplasm"/>
    <property type="evidence" value="ECO:0007669"/>
    <property type="project" value="UniProtKB-SubCell"/>
</dbReference>
<dbReference type="GO" id="GO:0005524">
    <property type="term" value="F:ATP binding"/>
    <property type="evidence" value="ECO:0007669"/>
    <property type="project" value="UniProtKB-KW"/>
</dbReference>
<dbReference type="GO" id="GO:0004595">
    <property type="term" value="F:pantetheine-phosphate adenylyltransferase activity"/>
    <property type="evidence" value="ECO:0007669"/>
    <property type="project" value="UniProtKB-UniRule"/>
</dbReference>
<dbReference type="GO" id="GO:0015937">
    <property type="term" value="P:coenzyme A biosynthetic process"/>
    <property type="evidence" value="ECO:0007669"/>
    <property type="project" value="UniProtKB-UniRule"/>
</dbReference>
<dbReference type="CDD" id="cd02163">
    <property type="entry name" value="PPAT"/>
    <property type="match status" value="1"/>
</dbReference>
<dbReference type="Gene3D" id="3.40.50.620">
    <property type="entry name" value="HUPs"/>
    <property type="match status" value="1"/>
</dbReference>
<dbReference type="HAMAP" id="MF_00151">
    <property type="entry name" value="PPAT_bact"/>
    <property type="match status" value="1"/>
</dbReference>
<dbReference type="InterPro" id="IPR004821">
    <property type="entry name" value="Cyt_trans-like"/>
</dbReference>
<dbReference type="InterPro" id="IPR001980">
    <property type="entry name" value="PPAT"/>
</dbReference>
<dbReference type="InterPro" id="IPR014729">
    <property type="entry name" value="Rossmann-like_a/b/a_fold"/>
</dbReference>
<dbReference type="NCBIfam" id="TIGR01510">
    <property type="entry name" value="coaD_prev_kdtB"/>
    <property type="match status" value="1"/>
</dbReference>
<dbReference type="NCBIfam" id="TIGR00125">
    <property type="entry name" value="cyt_tran_rel"/>
    <property type="match status" value="1"/>
</dbReference>
<dbReference type="PANTHER" id="PTHR21342">
    <property type="entry name" value="PHOSPHOPANTETHEINE ADENYLYLTRANSFERASE"/>
    <property type="match status" value="1"/>
</dbReference>
<dbReference type="PANTHER" id="PTHR21342:SF1">
    <property type="entry name" value="PHOSPHOPANTETHEINE ADENYLYLTRANSFERASE"/>
    <property type="match status" value="1"/>
</dbReference>
<dbReference type="Pfam" id="PF01467">
    <property type="entry name" value="CTP_transf_like"/>
    <property type="match status" value="1"/>
</dbReference>
<dbReference type="PRINTS" id="PR01020">
    <property type="entry name" value="LPSBIOSNTHSS"/>
</dbReference>
<dbReference type="SUPFAM" id="SSF52374">
    <property type="entry name" value="Nucleotidylyl transferase"/>
    <property type="match status" value="1"/>
</dbReference>
<keyword id="KW-0067">ATP-binding</keyword>
<keyword id="KW-0173">Coenzyme A biosynthesis</keyword>
<keyword id="KW-0963">Cytoplasm</keyword>
<keyword id="KW-0460">Magnesium</keyword>
<keyword id="KW-0547">Nucleotide-binding</keyword>
<keyword id="KW-0548">Nucleotidyltransferase</keyword>
<keyword id="KW-0808">Transferase</keyword>
<reference key="1">
    <citation type="submission" date="2008-10" db="EMBL/GenBank/DDBJ databases">
        <title>The complete genome sequence of Helicobacter pylori strain P12.</title>
        <authorList>
            <person name="Fischer W."/>
            <person name="Windhager L."/>
            <person name="Karnholz A."/>
            <person name="Zeiller M."/>
            <person name="Zimmer R."/>
            <person name="Haas R."/>
        </authorList>
    </citation>
    <scope>NUCLEOTIDE SEQUENCE [LARGE SCALE GENOMIC DNA]</scope>
    <source>
        <strain>P12</strain>
    </source>
</reference>
<gene>
    <name evidence="1" type="primary">coaD</name>
    <name type="ordered locus">HPP12_1453</name>
</gene>
<proteinExistence type="inferred from homology"/>
<feature type="chain" id="PRO_1000096800" description="Phosphopantetheine adenylyltransferase">
    <location>
        <begin position="1"/>
        <end position="157"/>
    </location>
</feature>
<feature type="binding site" evidence="1">
    <location>
        <begin position="10"/>
        <end position="11"/>
    </location>
    <ligand>
        <name>ATP</name>
        <dbReference type="ChEBI" id="CHEBI:30616"/>
    </ligand>
</feature>
<feature type="binding site" evidence="1">
    <location>
        <position position="10"/>
    </location>
    <ligand>
        <name>substrate</name>
    </ligand>
</feature>
<feature type="binding site" evidence="1">
    <location>
        <position position="18"/>
    </location>
    <ligand>
        <name>ATP</name>
        <dbReference type="ChEBI" id="CHEBI:30616"/>
    </ligand>
</feature>
<feature type="binding site" evidence="1">
    <location>
        <position position="42"/>
    </location>
    <ligand>
        <name>substrate</name>
    </ligand>
</feature>
<feature type="binding site" evidence="1">
    <location>
        <position position="74"/>
    </location>
    <ligand>
        <name>substrate</name>
    </ligand>
</feature>
<feature type="binding site" evidence="1">
    <location>
        <position position="88"/>
    </location>
    <ligand>
        <name>substrate</name>
    </ligand>
</feature>
<feature type="binding site" evidence="1">
    <location>
        <begin position="89"/>
        <end position="91"/>
    </location>
    <ligand>
        <name>ATP</name>
        <dbReference type="ChEBI" id="CHEBI:30616"/>
    </ligand>
</feature>
<feature type="binding site" evidence="1">
    <location>
        <position position="99"/>
    </location>
    <ligand>
        <name>ATP</name>
        <dbReference type="ChEBI" id="CHEBI:30616"/>
    </ligand>
</feature>
<feature type="binding site" evidence="1">
    <location>
        <begin position="124"/>
        <end position="130"/>
    </location>
    <ligand>
        <name>ATP</name>
        <dbReference type="ChEBI" id="CHEBI:30616"/>
    </ligand>
</feature>
<feature type="site" description="Transition state stabilizer" evidence="1">
    <location>
        <position position="18"/>
    </location>
</feature>
<organism>
    <name type="scientific">Helicobacter pylori (strain P12)</name>
    <dbReference type="NCBI Taxonomy" id="570508"/>
    <lineage>
        <taxon>Bacteria</taxon>
        <taxon>Pseudomonadati</taxon>
        <taxon>Campylobacterota</taxon>
        <taxon>Epsilonproteobacteria</taxon>
        <taxon>Campylobacterales</taxon>
        <taxon>Helicobacteraceae</taxon>
        <taxon>Helicobacter</taxon>
    </lineage>
</organism>
<evidence type="ECO:0000255" key="1">
    <source>
        <dbReference type="HAMAP-Rule" id="MF_00151"/>
    </source>
</evidence>
<accession>B6JNX3</accession>
<protein>
    <recommendedName>
        <fullName evidence="1">Phosphopantetheine adenylyltransferase</fullName>
        <ecNumber evidence="1">2.7.7.3</ecNumber>
    </recommendedName>
    <alternativeName>
        <fullName evidence="1">Dephospho-CoA pyrophosphorylase</fullName>
    </alternativeName>
    <alternativeName>
        <fullName evidence="1">Pantetheine-phosphate adenylyltransferase</fullName>
        <shortName evidence="1">PPAT</shortName>
    </alternativeName>
</protein>
<comment type="function">
    <text evidence="1">Reversibly transfers an adenylyl group from ATP to 4'-phosphopantetheine, yielding dephospho-CoA (dPCoA) and pyrophosphate.</text>
</comment>
<comment type="catalytic activity">
    <reaction evidence="1">
        <text>(R)-4'-phosphopantetheine + ATP + H(+) = 3'-dephospho-CoA + diphosphate</text>
        <dbReference type="Rhea" id="RHEA:19801"/>
        <dbReference type="ChEBI" id="CHEBI:15378"/>
        <dbReference type="ChEBI" id="CHEBI:30616"/>
        <dbReference type="ChEBI" id="CHEBI:33019"/>
        <dbReference type="ChEBI" id="CHEBI:57328"/>
        <dbReference type="ChEBI" id="CHEBI:61723"/>
        <dbReference type="EC" id="2.7.7.3"/>
    </reaction>
</comment>
<comment type="cofactor">
    <cofactor evidence="1">
        <name>Mg(2+)</name>
        <dbReference type="ChEBI" id="CHEBI:18420"/>
    </cofactor>
</comment>
<comment type="pathway">
    <text evidence="1">Cofactor biosynthesis; coenzyme A biosynthesis; CoA from (R)-pantothenate: step 4/5.</text>
</comment>
<comment type="subunit">
    <text evidence="1">Homohexamer.</text>
</comment>
<comment type="subcellular location">
    <subcellularLocation>
        <location evidence="1">Cytoplasm</location>
    </subcellularLocation>
</comment>
<comment type="similarity">
    <text evidence="1">Belongs to the bacterial CoaD family.</text>
</comment>
<name>COAD_HELP2</name>
<sequence>MQKIGIYPGTFDPVTNGHIDIIHRSSELFEKLIVAVAHSSAKNPMFSLKERLKMMQLATKSFKNVECVAFEGLLANLAKEYHCKVLVRGLRVVSDFEYELQMGYANKSLNHELETLYFMPTLQNAFISSSIVRSIIAHKGDASHLVPKEIYPLISKA</sequence>